<protein>
    <recommendedName>
        <fullName>Zinc finger protein WIP4</fullName>
    </recommendedName>
    <alternativeName>
        <fullName evidence="5">WIP-domain protein 4</fullName>
        <shortName evidence="5">AtWIP4</shortName>
    </alternativeName>
</protein>
<proteinExistence type="evidence at transcript level"/>
<sequence length="412" mass="47155">MLFSTVLSHRTLYILTCPNTLIHSYTHPHIHAYLAFTGFLTQLHHLEISCLLLLFFSLSSLLKLMADPDCIFRNGYVDYYNYSFNYATSLSRIYNSHDSFYYPHQTTNPNINENPNLTSPDSPPLREALPLLSLSPIHKHQEPTANHHEYYFMETTETSSNSNFLDQCQDSYRHDVTVDLHLGLPNLGDGGSSSSDVVLDSTDHQEGHHDHHQDQGLEVTMASDHDDEHGGLQRGNHLHHFWIPTPSQILMGPTQFSCPLCFKTFNRYNNMQMHMWGHGSQYRKGPESLRGTQPTAMLKLPCYCCAPGCKNNIDHPRARPLKDFRTLQTHYKRKHGVRPFACRRCGKAFAVKGDWRTHEKNCGKLWYCSCGSDFKHKRSLKDHVKAFGNGHVPCCGIDHEEEEAASDVEQQE</sequence>
<accession>Q8W030</accession>
<accession>Q9LT33</accession>
<dbReference type="EMBL" id="AJ311811">
    <property type="protein sequence ID" value="CAC86168.1"/>
    <property type="molecule type" value="mRNA"/>
</dbReference>
<dbReference type="EMBL" id="AB025629">
    <property type="protein sequence ID" value="BAB02496.1"/>
    <property type="status" value="ALT_INIT"/>
    <property type="molecule type" value="Genomic_DNA"/>
</dbReference>
<dbReference type="EMBL" id="CP002686">
    <property type="protein sequence ID" value="AEE76435.1"/>
    <property type="molecule type" value="Genomic_DNA"/>
</dbReference>
<dbReference type="RefSeq" id="NP_188724.2">
    <property type="nucleotide sequence ID" value="NM_112980.3"/>
</dbReference>
<dbReference type="STRING" id="3702.Q8W030"/>
<dbReference type="PaxDb" id="3702-AT3G20880.1"/>
<dbReference type="EnsemblPlants" id="AT3G20880.1">
    <property type="protein sequence ID" value="AT3G20880.1"/>
    <property type="gene ID" value="AT3G20880"/>
</dbReference>
<dbReference type="GeneID" id="821637"/>
<dbReference type="Gramene" id="AT3G20880.1">
    <property type="protein sequence ID" value="AT3G20880.1"/>
    <property type="gene ID" value="AT3G20880"/>
</dbReference>
<dbReference type="KEGG" id="ath:AT3G20880"/>
<dbReference type="Araport" id="AT3G20880"/>
<dbReference type="TAIR" id="AT3G20880">
    <property type="gene designation" value="WIP4"/>
</dbReference>
<dbReference type="eggNOG" id="KOG1721">
    <property type="taxonomic scope" value="Eukaryota"/>
</dbReference>
<dbReference type="HOGENOM" id="CLU_052255_0_1_1"/>
<dbReference type="InParanoid" id="Q8W030"/>
<dbReference type="OMA" id="PIHKHQE"/>
<dbReference type="PhylomeDB" id="Q8W030"/>
<dbReference type="PRO" id="PR:Q8W030"/>
<dbReference type="Proteomes" id="UP000006548">
    <property type="component" value="Chromosome 3"/>
</dbReference>
<dbReference type="ExpressionAtlas" id="Q8W030">
    <property type="expression patterns" value="baseline and differential"/>
</dbReference>
<dbReference type="GO" id="GO:0005634">
    <property type="term" value="C:nucleus"/>
    <property type="evidence" value="ECO:0000314"/>
    <property type="project" value="TAIR"/>
</dbReference>
<dbReference type="GO" id="GO:0003700">
    <property type="term" value="F:DNA-binding transcription factor activity"/>
    <property type="evidence" value="ECO:0000250"/>
    <property type="project" value="TAIR"/>
</dbReference>
<dbReference type="GO" id="GO:0008270">
    <property type="term" value="F:zinc ion binding"/>
    <property type="evidence" value="ECO:0007669"/>
    <property type="project" value="UniProtKB-KW"/>
</dbReference>
<dbReference type="GO" id="GO:0080022">
    <property type="term" value="P:primary root development"/>
    <property type="evidence" value="ECO:0000316"/>
    <property type="project" value="TAIR"/>
</dbReference>
<dbReference type="GO" id="GO:0006355">
    <property type="term" value="P:regulation of DNA-templated transcription"/>
    <property type="evidence" value="ECO:0000304"/>
    <property type="project" value="TAIR"/>
</dbReference>
<dbReference type="FunFam" id="3.30.160.60:FF:000523">
    <property type="entry name" value="Zinc finger protein WIP2"/>
    <property type="match status" value="1"/>
</dbReference>
<dbReference type="Gene3D" id="3.30.160.60">
    <property type="entry name" value="Classic Zinc Finger"/>
    <property type="match status" value="1"/>
</dbReference>
<dbReference type="InterPro" id="IPR055187">
    <property type="entry name" value="C2CH-3rd_BIRD-IDD"/>
</dbReference>
<dbReference type="InterPro" id="IPR043584">
    <property type="entry name" value="WIP1/2/3/4/5/6"/>
</dbReference>
<dbReference type="InterPro" id="IPR036236">
    <property type="entry name" value="Znf_C2H2_sf"/>
</dbReference>
<dbReference type="InterPro" id="IPR013087">
    <property type="entry name" value="Znf_C2H2_type"/>
</dbReference>
<dbReference type="PANTHER" id="PTHR45878">
    <property type="entry name" value="ZINC FINGER PROTEIN WIP2"/>
    <property type="match status" value="1"/>
</dbReference>
<dbReference type="PANTHER" id="PTHR45878:SF12">
    <property type="entry name" value="ZINC FINGER PROTEIN WIP4"/>
    <property type="match status" value="1"/>
</dbReference>
<dbReference type="Pfam" id="PF22995">
    <property type="entry name" value="C2CH-3rd_BIRD-IDD"/>
    <property type="match status" value="1"/>
</dbReference>
<dbReference type="Pfam" id="PF23115">
    <property type="entry name" value="zf-C2H2_STOP2_3rd"/>
    <property type="match status" value="1"/>
</dbReference>
<dbReference type="SUPFAM" id="SSF57667">
    <property type="entry name" value="beta-beta-alpha zinc fingers"/>
    <property type="match status" value="1"/>
</dbReference>
<dbReference type="PROSITE" id="PS00028">
    <property type="entry name" value="ZINC_FINGER_C2H2_1"/>
    <property type="match status" value="1"/>
</dbReference>
<dbReference type="PROSITE" id="PS50157">
    <property type="entry name" value="ZINC_FINGER_C2H2_2"/>
    <property type="match status" value="2"/>
</dbReference>
<keyword id="KW-0479">Metal-binding</keyword>
<keyword id="KW-0539">Nucleus</keyword>
<keyword id="KW-1185">Reference proteome</keyword>
<keyword id="KW-0677">Repeat</keyword>
<keyword id="KW-0804">Transcription</keyword>
<keyword id="KW-0805">Transcription regulation</keyword>
<keyword id="KW-0862">Zinc</keyword>
<keyword id="KW-0863">Zinc-finger</keyword>
<gene>
    <name evidence="5" type="primary">WIP4</name>
    <name evidence="9" type="ordered locus">At3g20880</name>
    <name evidence="10" type="ORF">MOE17.19</name>
</gene>
<name>ZWIP4_ARATH</name>
<comment type="function">
    <text evidence="8">Probable transcriptional regulator.</text>
</comment>
<comment type="subcellular location">
    <subcellularLocation>
        <location evidence="4">Nucleus</location>
    </subcellularLocation>
</comment>
<comment type="similarity">
    <text evidence="7">Belongs to the WIP C2H2-type zinc-finger protein family.</text>
</comment>
<comment type="sequence caution" evidence="7">
    <conflict type="erroneous initiation">
        <sequence resource="EMBL-CDS" id="BAB02496"/>
    </conflict>
    <text>Truncated N-terminus.</text>
</comment>
<evidence type="ECO:0000250" key="1">
    <source>
        <dbReference type="UniProtKB" id="Q8VWG3"/>
    </source>
</evidence>
<evidence type="ECO:0000255" key="2">
    <source>
        <dbReference type="PROSITE-ProRule" id="PRU00042"/>
    </source>
</evidence>
<evidence type="ECO:0000256" key="3">
    <source>
        <dbReference type="SAM" id="MobiDB-lite"/>
    </source>
</evidence>
<evidence type="ECO:0000269" key="4">
    <source>
    </source>
</evidence>
<evidence type="ECO:0000303" key="5">
    <source>
    </source>
</evidence>
<evidence type="ECO:0000303" key="6">
    <source>
    </source>
</evidence>
<evidence type="ECO:0000305" key="7"/>
<evidence type="ECO:0000305" key="8">
    <source>
    </source>
</evidence>
<evidence type="ECO:0000312" key="9">
    <source>
        <dbReference type="Araport" id="AT3G20880"/>
    </source>
</evidence>
<evidence type="ECO:0000312" key="10">
    <source>
        <dbReference type="EMBL" id="BAB02496.1"/>
    </source>
</evidence>
<feature type="chain" id="PRO_0000431318" description="Zinc finger protein WIP4">
    <location>
        <begin position="1"/>
        <end position="412"/>
    </location>
</feature>
<feature type="zinc finger region" description="C2H2-type 1" evidence="2">
    <location>
        <begin position="256"/>
        <end position="278"/>
    </location>
</feature>
<feature type="zinc finger region" description="C2H2-type 2; atypical" evidence="6">
    <location>
        <begin position="303"/>
        <end position="335"/>
    </location>
</feature>
<feature type="zinc finger region" description="C2H2-type 3; atypical" evidence="6">
    <location>
        <begin position="340"/>
        <end position="362"/>
    </location>
</feature>
<feature type="zinc finger region" description="C2H2-type 4; atypical" evidence="6">
    <location>
        <begin position="366"/>
        <end position="391"/>
    </location>
</feature>
<feature type="region of interest" description="Disordered" evidence="3">
    <location>
        <begin position="187"/>
        <end position="214"/>
    </location>
</feature>
<feature type="short sequence motif" description="Nuclear localization signal" evidence="1">
    <location>
        <begin position="332"/>
        <end position="335"/>
    </location>
</feature>
<feature type="short sequence motif" description="Nuclear localization signal" evidence="1">
    <location>
        <begin position="375"/>
        <end position="378"/>
    </location>
</feature>
<feature type="compositionally biased region" description="Basic and acidic residues" evidence="3">
    <location>
        <begin position="201"/>
        <end position="214"/>
    </location>
</feature>
<reference key="1">
    <citation type="journal article" date="2002" name="Genes Dev.">
        <title>A. thaliana TRANSPARENT TESTA 1 is involved in seed coat development and defines the WIP subfamily of plant zinc finger proteins.</title>
        <authorList>
            <person name="Sagasser M."/>
            <person name="Lu G.-H."/>
            <person name="Hahlbrock K."/>
            <person name="Weisshaar B."/>
        </authorList>
    </citation>
    <scope>NUCLEOTIDE SEQUENCE [MRNA]</scope>
    <source>
        <strain>cv. Columbia</strain>
    </source>
</reference>
<reference key="2">
    <citation type="journal article" date="2000" name="DNA Res.">
        <title>Structural analysis of Arabidopsis thaliana chromosome 3. I. Sequence features of the regions of 4,504,864 bp covered by sixty P1 and TAC clones.</title>
        <authorList>
            <person name="Sato S."/>
            <person name="Nakamura Y."/>
            <person name="Kaneko T."/>
            <person name="Katoh T."/>
            <person name="Asamizu E."/>
            <person name="Tabata S."/>
        </authorList>
    </citation>
    <scope>NUCLEOTIDE SEQUENCE [LARGE SCALE GENOMIC DNA]</scope>
    <source>
        <strain>cv. Columbia</strain>
    </source>
</reference>
<reference key="3">
    <citation type="journal article" date="2017" name="Plant J.">
        <title>Araport11: a complete reannotation of the Arabidopsis thaliana reference genome.</title>
        <authorList>
            <person name="Cheng C.Y."/>
            <person name="Krishnakumar V."/>
            <person name="Chan A.P."/>
            <person name="Thibaud-Nissen F."/>
            <person name="Schobel S."/>
            <person name="Town C.D."/>
        </authorList>
    </citation>
    <scope>GENOME REANNOTATION</scope>
    <source>
        <strain>cv. Columbia</strain>
    </source>
</reference>
<reference key="4">
    <citation type="journal article" date="2010" name="FEBS Lett.">
        <title>Weird fingers: functional analysis of WIP domain proteins.</title>
        <authorList>
            <person name="Appelhagen I."/>
            <person name="Huep G."/>
            <person name="Lu G.H."/>
            <person name="Strompen G."/>
            <person name="Weisshaar B."/>
            <person name="Sagasser M."/>
        </authorList>
    </citation>
    <scope>SUBCELLULAR LOCATION</scope>
    <scope>ZINC-FINGER</scope>
</reference>
<organism>
    <name type="scientific">Arabidopsis thaliana</name>
    <name type="common">Mouse-ear cress</name>
    <dbReference type="NCBI Taxonomy" id="3702"/>
    <lineage>
        <taxon>Eukaryota</taxon>
        <taxon>Viridiplantae</taxon>
        <taxon>Streptophyta</taxon>
        <taxon>Embryophyta</taxon>
        <taxon>Tracheophyta</taxon>
        <taxon>Spermatophyta</taxon>
        <taxon>Magnoliopsida</taxon>
        <taxon>eudicotyledons</taxon>
        <taxon>Gunneridae</taxon>
        <taxon>Pentapetalae</taxon>
        <taxon>rosids</taxon>
        <taxon>malvids</taxon>
        <taxon>Brassicales</taxon>
        <taxon>Brassicaceae</taxon>
        <taxon>Camelineae</taxon>
        <taxon>Arabidopsis</taxon>
    </lineage>
</organism>